<feature type="chain" id="PRO_0000225545" description="DNA-directed RNA polymerase subunit beta'">
    <location>
        <begin position="1"/>
        <end position="1401"/>
    </location>
</feature>
<feature type="binding site" evidence="1">
    <location>
        <position position="70"/>
    </location>
    <ligand>
        <name>Zn(2+)</name>
        <dbReference type="ChEBI" id="CHEBI:29105"/>
        <label>1</label>
    </ligand>
</feature>
<feature type="binding site" evidence="1">
    <location>
        <position position="72"/>
    </location>
    <ligand>
        <name>Zn(2+)</name>
        <dbReference type="ChEBI" id="CHEBI:29105"/>
        <label>1</label>
    </ligand>
</feature>
<feature type="binding site" evidence="1">
    <location>
        <position position="85"/>
    </location>
    <ligand>
        <name>Zn(2+)</name>
        <dbReference type="ChEBI" id="CHEBI:29105"/>
        <label>1</label>
    </ligand>
</feature>
<feature type="binding site" evidence="1">
    <location>
        <position position="88"/>
    </location>
    <ligand>
        <name>Zn(2+)</name>
        <dbReference type="ChEBI" id="CHEBI:29105"/>
        <label>1</label>
    </ligand>
</feature>
<feature type="binding site" evidence="1">
    <location>
        <position position="460"/>
    </location>
    <ligand>
        <name>Mg(2+)</name>
        <dbReference type="ChEBI" id="CHEBI:18420"/>
    </ligand>
</feature>
<feature type="binding site" evidence="1">
    <location>
        <position position="462"/>
    </location>
    <ligand>
        <name>Mg(2+)</name>
        <dbReference type="ChEBI" id="CHEBI:18420"/>
    </ligand>
</feature>
<feature type="binding site" evidence="1">
    <location>
        <position position="464"/>
    </location>
    <ligand>
        <name>Mg(2+)</name>
        <dbReference type="ChEBI" id="CHEBI:18420"/>
    </ligand>
</feature>
<feature type="binding site" evidence="1">
    <location>
        <position position="808"/>
    </location>
    <ligand>
        <name>Zn(2+)</name>
        <dbReference type="ChEBI" id="CHEBI:29105"/>
        <label>2</label>
    </ligand>
</feature>
<feature type="binding site" evidence="1">
    <location>
        <position position="882"/>
    </location>
    <ligand>
        <name>Zn(2+)</name>
        <dbReference type="ChEBI" id="CHEBI:29105"/>
        <label>2</label>
    </ligand>
</feature>
<feature type="binding site" evidence="1">
    <location>
        <position position="889"/>
    </location>
    <ligand>
        <name>Zn(2+)</name>
        <dbReference type="ChEBI" id="CHEBI:29105"/>
        <label>2</label>
    </ligand>
</feature>
<feature type="binding site" evidence="1">
    <location>
        <position position="892"/>
    </location>
    <ligand>
        <name>Zn(2+)</name>
        <dbReference type="ChEBI" id="CHEBI:29105"/>
        <label>2</label>
    </ligand>
</feature>
<gene>
    <name evidence="1" type="primary">rpoC</name>
    <name type="ordered locus">lpl0363</name>
</gene>
<comment type="function">
    <text evidence="1">DNA-dependent RNA polymerase catalyzes the transcription of DNA into RNA using the four ribonucleoside triphosphates as substrates.</text>
</comment>
<comment type="catalytic activity">
    <reaction evidence="1">
        <text>RNA(n) + a ribonucleoside 5'-triphosphate = RNA(n+1) + diphosphate</text>
        <dbReference type="Rhea" id="RHEA:21248"/>
        <dbReference type="Rhea" id="RHEA-COMP:14527"/>
        <dbReference type="Rhea" id="RHEA-COMP:17342"/>
        <dbReference type="ChEBI" id="CHEBI:33019"/>
        <dbReference type="ChEBI" id="CHEBI:61557"/>
        <dbReference type="ChEBI" id="CHEBI:140395"/>
        <dbReference type="EC" id="2.7.7.6"/>
    </reaction>
</comment>
<comment type="cofactor">
    <cofactor evidence="1">
        <name>Mg(2+)</name>
        <dbReference type="ChEBI" id="CHEBI:18420"/>
    </cofactor>
    <text evidence="1">Binds 1 Mg(2+) ion per subunit.</text>
</comment>
<comment type="cofactor">
    <cofactor evidence="1">
        <name>Zn(2+)</name>
        <dbReference type="ChEBI" id="CHEBI:29105"/>
    </cofactor>
    <text evidence="1">Binds 2 Zn(2+) ions per subunit.</text>
</comment>
<comment type="subunit">
    <text evidence="1">The RNAP catalytic core consists of 2 alpha, 1 beta, 1 beta' and 1 omega subunit. When a sigma factor is associated with the core the holoenzyme is formed, which can initiate transcription.</text>
</comment>
<comment type="similarity">
    <text evidence="1">Belongs to the RNA polymerase beta' chain family.</text>
</comment>
<dbReference type="EC" id="2.7.7.6" evidence="1"/>
<dbReference type="EMBL" id="CR628337">
    <property type="protein sequence ID" value="CAH14594.1"/>
    <property type="molecule type" value="Genomic_DNA"/>
</dbReference>
<dbReference type="RefSeq" id="WP_011214622.1">
    <property type="nucleotide sequence ID" value="NC_006369.1"/>
</dbReference>
<dbReference type="SMR" id="Q5WZL8"/>
<dbReference type="KEGG" id="lpf:lpl0363"/>
<dbReference type="LegioList" id="lpl0363"/>
<dbReference type="HOGENOM" id="CLU_000524_3_1_6"/>
<dbReference type="Proteomes" id="UP000002517">
    <property type="component" value="Chromosome"/>
</dbReference>
<dbReference type="GO" id="GO:0000428">
    <property type="term" value="C:DNA-directed RNA polymerase complex"/>
    <property type="evidence" value="ECO:0007669"/>
    <property type="project" value="UniProtKB-KW"/>
</dbReference>
<dbReference type="GO" id="GO:0003677">
    <property type="term" value="F:DNA binding"/>
    <property type="evidence" value="ECO:0007669"/>
    <property type="project" value="UniProtKB-UniRule"/>
</dbReference>
<dbReference type="GO" id="GO:0003899">
    <property type="term" value="F:DNA-directed RNA polymerase activity"/>
    <property type="evidence" value="ECO:0007669"/>
    <property type="project" value="UniProtKB-UniRule"/>
</dbReference>
<dbReference type="GO" id="GO:0000287">
    <property type="term" value="F:magnesium ion binding"/>
    <property type="evidence" value="ECO:0007669"/>
    <property type="project" value="UniProtKB-UniRule"/>
</dbReference>
<dbReference type="GO" id="GO:0008270">
    <property type="term" value="F:zinc ion binding"/>
    <property type="evidence" value="ECO:0007669"/>
    <property type="project" value="UniProtKB-UniRule"/>
</dbReference>
<dbReference type="GO" id="GO:0006351">
    <property type="term" value="P:DNA-templated transcription"/>
    <property type="evidence" value="ECO:0007669"/>
    <property type="project" value="UniProtKB-UniRule"/>
</dbReference>
<dbReference type="CDD" id="cd02655">
    <property type="entry name" value="RNAP_beta'_C"/>
    <property type="match status" value="1"/>
</dbReference>
<dbReference type="CDD" id="cd01609">
    <property type="entry name" value="RNAP_beta'_N"/>
    <property type="match status" value="1"/>
</dbReference>
<dbReference type="FunFam" id="1.10.132.30:FF:000003">
    <property type="entry name" value="DNA-directed RNA polymerase subunit beta"/>
    <property type="match status" value="1"/>
</dbReference>
<dbReference type="FunFam" id="1.10.150.390:FF:000002">
    <property type="entry name" value="DNA-directed RNA polymerase subunit beta"/>
    <property type="match status" value="1"/>
</dbReference>
<dbReference type="FunFam" id="1.10.40.90:FF:000001">
    <property type="entry name" value="DNA-directed RNA polymerase subunit beta"/>
    <property type="match status" value="1"/>
</dbReference>
<dbReference type="Gene3D" id="1.10.132.30">
    <property type="match status" value="1"/>
</dbReference>
<dbReference type="Gene3D" id="1.10.150.390">
    <property type="match status" value="1"/>
</dbReference>
<dbReference type="Gene3D" id="1.10.1790.20">
    <property type="match status" value="1"/>
</dbReference>
<dbReference type="Gene3D" id="1.10.40.90">
    <property type="match status" value="1"/>
</dbReference>
<dbReference type="Gene3D" id="2.40.40.20">
    <property type="match status" value="1"/>
</dbReference>
<dbReference type="Gene3D" id="2.40.50.100">
    <property type="match status" value="3"/>
</dbReference>
<dbReference type="Gene3D" id="4.10.860.120">
    <property type="entry name" value="RNA polymerase II, clamp domain"/>
    <property type="match status" value="1"/>
</dbReference>
<dbReference type="Gene3D" id="1.10.274.100">
    <property type="entry name" value="RNA polymerase Rpb1, domain 3"/>
    <property type="match status" value="2"/>
</dbReference>
<dbReference type="HAMAP" id="MF_01322">
    <property type="entry name" value="RNApol_bact_RpoC"/>
    <property type="match status" value="1"/>
</dbReference>
<dbReference type="InterPro" id="IPR045867">
    <property type="entry name" value="DNA-dir_RpoC_beta_prime"/>
</dbReference>
<dbReference type="InterPro" id="IPR012754">
    <property type="entry name" value="DNA-dir_RpoC_beta_prime_bact"/>
</dbReference>
<dbReference type="InterPro" id="IPR000722">
    <property type="entry name" value="RNA_pol_asu"/>
</dbReference>
<dbReference type="InterPro" id="IPR006592">
    <property type="entry name" value="RNA_pol_N"/>
</dbReference>
<dbReference type="InterPro" id="IPR007080">
    <property type="entry name" value="RNA_pol_Rpb1_1"/>
</dbReference>
<dbReference type="InterPro" id="IPR007066">
    <property type="entry name" value="RNA_pol_Rpb1_3"/>
</dbReference>
<dbReference type="InterPro" id="IPR042102">
    <property type="entry name" value="RNA_pol_Rpb1_3_sf"/>
</dbReference>
<dbReference type="InterPro" id="IPR007083">
    <property type="entry name" value="RNA_pol_Rpb1_4"/>
</dbReference>
<dbReference type="InterPro" id="IPR007081">
    <property type="entry name" value="RNA_pol_Rpb1_5"/>
</dbReference>
<dbReference type="InterPro" id="IPR044893">
    <property type="entry name" value="RNA_pol_Rpb1_clamp_domain"/>
</dbReference>
<dbReference type="InterPro" id="IPR038120">
    <property type="entry name" value="Rpb1_funnel_sf"/>
</dbReference>
<dbReference type="NCBIfam" id="TIGR02386">
    <property type="entry name" value="rpoC_TIGR"/>
    <property type="match status" value="1"/>
</dbReference>
<dbReference type="PANTHER" id="PTHR19376">
    <property type="entry name" value="DNA-DIRECTED RNA POLYMERASE"/>
    <property type="match status" value="1"/>
</dbReference>
<dbReference type="PANTHER" id="PTHR19376:SF54">
    <property type="entry name" value="DNA-DIRECTED RNA POLYMERASE SUBUNIT BETA"/>
    <property type="match status" value="1"/>
</dbReference>
<dbReference type="Pfam" id="PF04997">
    <property type="entry name" value="RNA_pol_Rpb1_1"/>
    <property type="match status" value="1"/>
</dbReference>
<dbReference type="Pfam" id="PF00623">
    <property type="entry name" value="RNA_pol_Rpb1_2"/>
    <property type="match status" value="1"/>
</dbReference>
<dbReference type="Pfam" id="PF04983">
    <property type="entry name" value="RNA_pol_Rpb1_3"/>
    <property type="match status" value="1"/>
</dbReference>
<dbReference type="Pfam" id="PF05000">
    <property type="entry name" value="RNA_pol_Rpb1_4"/>
    <property type="match status" value="1"/>
</dbReference>
<dbReference type="Pfam" id="PF04998">
    <property type="entry name" value="RNA_pol_Rpb1_5"/>
    <property type="match status" value="1"/>
</dbReference>
<dbReference type="SMART" id="SM00663">
    <property type="entry name" value="RPOLA_N"/>
    <property type="match status" value="1"/>
</dbReference>
<dbReference type="SUPFAM" id="SSF64484">
    <property type="entry name" value="beta and beta-prime subunits of DNA dependent RNA-polymerase"/>
    <property type="match status" value="1"/>
</dbReference>
<keyword id="KW-0240">DNA-directed RNA polymerase</keyword>
<keyword id="KW-0460">Magnesium</keyword>
<keyword id="KW-0479">Metal-binding</keyword>
<keyword id="KW-0548">Nucleotidyltransferase</keyword>
<keyword id="KW-0804">Transcription</keyword>
<keyword id="KW-0808">Transferase</keyword>
<keyword id="KW-0862">Zinc</keyword>
<protein>
    <recommendedName>
        <fullName evidence="1">DNA-directed RNA polymerase subunit beta'</fullName>
        <shortName evidence="1">RNAP subunit beta'</shortName>
        <ecNumber evidence="1">2.7.7.6</ecNumber>
    </recommendedName>
    <alternativeName>
        <fullName evidence="1">RNA polymerase subunit beta'</fullName>
    </alternativeName>
    <alternativeName>
        <fullName evidence="1">Transcriptase subunit beta'</fullName>
    </alternativeName>
</protein>
<reference key="1">
    <citation type="journal article" date="2004" name="Nat. Genet.">
        <title>Evidence in the Legionella pneumophila genome for exploitation of host cell functions and high genome plasticity.</title>
        <authorList>
            <person name="Cazalet C."/>
            <person name="Rusniok C."/>
            <person name="Brueggemann H."/>
            <person name="Zidane N."/>
            <person name="Magnier A."/>
            <person name="Ma L."/>
            <person name="Tichit M."/>
            <person name="Jarraud S."/>
            <person name="Bouchier C."/>
            <person name="Vandenesch F."/>
            <person name="Kunst F."/>
            <person name="Etienne J."/>
            <person name="Glaser P."/>
            <person name="Buchrieser C."/>
        </authorList>
    </citation>
    <scope>NUCLEOTIDE SEQUENCE [LARGE SCALE GENOMIC DNA]</scope>
    <source>
        <strain>Lens</strain>
    </source>
</reference>
<evidence type="ECO:0000255" key="1">
    <source>
        <dbReference type="HAMAP-Rule" id="MF_01322"/>
    </source>
</evidence>
<name>RPOC_LEGPL</name>
<accession>Q5WZL8</accession>
<sequence>MSDLLGILKQQGQSEEFDAIKIALASPELIRSWSYGEVKKPETINYRTFKPERDGLFCAKTFGPVKDYECLCGKYKRLKHRGVICEKCGVELALAKVRRERMGHIELASPVAHIWFLKSLPSRIGLLLDMTLRDIERVLYFEAFVVVDPGMTELERGQLLNDEAYLDAMEQYGDEFDARMGAEAIRDLLRQIDLEDEIRNLREELPTTNSETKIKKITKRLKLLEAFYESGNKPEWMIMDVLPVLPPDLRPLVPLDGGRFATSDLNDLYRRVINRNNRLKRLLDLNAPDIIVRNEKRMLQESVDALLDNGRRGRAITGTNKRPLKSLADMIKGKQGRFRQNLLGKRVDYSGRSVIVVGPTLKLHQCGLPKKMALELFKPFIFSKLEFRGLATTIKAAKKMVEREESVVWDILDDVIREHPILLNRAPTLHRLGIQAFEPVLIEGKAIQLHPLVCTAYNADFDGDQMAVHVPLTLEAQLEARSLMMSTNNILSPASGEPIIVPSQDVVLGLYYLTREKVNALGEGKIYSSAQEAQNFYEAGHLDIHAKIKIRMPKEDGETGYHLVETTVGRAILAEILPKGMPFDYINRTMTKKVISKVIDSCYRKFGLKETVIFADQLMYTGFKYATRSGASIGIEDMEIPDDKASIIEHADNEVREIESQFRSGLVTNGERYNKVIDIWSRTNELVAKSMMSKIATEEVADAKGNKVRQESFNPIFMMADSGARGSAAQIRQLAGMRGLMAAPDGSIIETPITANFREGLNVFQYFISTHGARKGLADTALKTANSGYLTRRLVDVAQDVVITEDDCGTDTGILMQPLIEGGDIVEPLHERVLGRVVASDVYIPTQTEPVVKAGTLLDEEWVEKLEKHGVDQVMVRSPITCQTRFGLCAKCYGRDLARGHLVNTGEAVGIIAAQSIGEPGTQLTMRTFHIGGAASRATAANNIQIKTKGVIRLHNIKTVTHENKNLVAVSRSGEVTIVDEFGRERERYKVPYGAVISAQDNSPVEAGQVIATWDPHTHPVISEVSGRLKFVDLIDGITMNRQTDELTGLSNIVIIDAKQRSAAGRDLRPMVKLVTDEGDDIYLAGTNVPAQYYLPVDAIVNFEDRSLVGIGDVIARIPQERSKTRDITGGLPRVADLFEARKPKDSAVMAEVSGLVNFGKETKGKRRLIINVSEDQCHEELIPKWRHISVFEGEHVERGEIIAEGALNPHDILRLLGVGALANYIVNEVQDVYRLQGVKINDKHIEVIVRQMLRKRVITFAGDSKFLVGEQVEESAMLQENDKLLAEGKQIARGTPILLGITKASLATESFISAASFQETTRVLTEAAVSGKVDELRGLKENVMVGRLIPAGTGYTYHQSRKAKRARVAAGGDSSATHTVTASDVEHALSEALNADNHEH</sequence>
<organism>
    <name type="scientific">Legionella pneumophila (strain Lens)</name>
    <dbReference type="NCBI Taxonomy" id="297245"/>
    <lineage>
        <taxon>Bacteria</taxon>
        <taxon>Pseudomonadati</taxon>
        <taxon>Pseudomonadota</taxon>
        <taxon>Gammaproteobacteria</taxon>
        <taxon>Legionellales</taxon>
        <taxon>Legionellaceae</taxon>
        <taxon>Legionella</taxon>
    </lineage>
</organism>
<proteinExistence type="inferred from homology"/>